<dbReference type="EC" id="2.1.1.222" evidence="1"/>
<dbReference type="EC" id="2.1.1.64" evidence="1"/>
<dbReference type="EMBL" id="CP001048">
    <property type="protein sequence ID" value="ACC88317.1"/>
    <property type="molecule type" value="Genomic_DNA"/>
</dbReference>
<dbReference type="RefSeq" id="WP_002210820.1">
    <property type="nucleotide sequence ID" value="NZ_CP009780.1"/>
</dbReference>
<dbReference type="SMR" id="B2K9A4"/>
<dbReference type="GeneID" id="57977354"/>
<dbReference type="KEGG" id="ypb:YPTS_1342"/>
<dbReference type="PATRIC" id="fig|502801.10.peg.695"/>
<dbReference type="UniPathway" id="UPA00232"/>
<dbReference type="GO" id="GO:0102208">
    <property type="term" value="F:2-polyprenyl-6-hydroxyphenol methylase activity"/>
    <property type="evidence" value="ECO:0007669"/>
    <property type="project" value="UniProtKB-EC"/>
</dbReference>
<dbReference type="GO" id="GO:0061542">
    <property type="term" value="F:3-demethylubiquinol 3-O-methyltransferase activity"/>
    <property type="evidence" value="ECO:0007669"/>
    <property type="project" value="UniProtKB-UniRule"/>
</dbReference>
<dbReference type="GO" id="GO:0010420">
    <property type="term" value="F:polyprenyldihydroxybenzoate methyltransferase activity"/>
    <property type="evidence" value="ECO:0007669"/>
    <property type="project" value="InterPro"/>
</dbReference>
<dbReference type="GO" id="GO:0032259">
    <property type="term" value="P:methylation"/>
    <property type="evidence" value="ECO:0007669"/>
    <property type="project" value="UniProtKB-KW"/>
</dbReference>
<dbReference type="CDD" id="cd02440">
    <property type="entry name" value="AdoMet_MTases"/>
    <property type="match status" value="1"/>
</dbReference>
<dbReference type="FunFam" id="3.40.50.150:FF:000028">
    <property type="entry name" value="Ubiquinone biosynthesis O-methyltransferase"/>
    <property type="match status" value="1"/>
</dbReference>
<dbReference type="Gene3D" id="3.40.50.150">
    <property type="entry name" value="Vaccinia Virus protein VP39"/>
    <property type="match status" value="1"/>
</dbReference>
<dbReference type="HAMAP" id="MF_00472">
    <property type="entry name" value="UbiG"/>
    <property type="match status" value="1"/>
</dbReference>
<dbReference type="InterPro" id="IPR029063">
    <property type="entry name" value="SAM-dependent_MTases_sf"/>
</dbReference>
<dbReference type="InterPro" id="IPR010233">
    <property type="entry name" value="UbiG_MeTrfase"/>
</dbReference>
<dbReference type="NCBIfam" id="TIGR01983">
    <property type="entry name" value="UbiG"/>
    <property type="match status" value="1"/>
</dbReference>
<dbReference type="PANTHER" id="PTHR43464">
    <property type="entry name" value="METHYLTRANSFERASE"/>
    <property type="match status" value="1"/>
</dbReference>
<dbReference type="PANTHER" id="PTHR43464:SF19">
    <property type="entry name" value="UBIQUINONE BIOSYNTHESIS O-METHYLTRANSFERASE, MITOCHONDRIAL"/>
    <property type="match status" value="1"/>
</dbReference>
<dbReference type="Pfam" id="PF13489">
    <property type="entry name" value="Methyltransf_23"/>
    <property type="match status" value="1"/>
</dbReference>
<dbReference type="SUPFAM" id="SSF53335">
    <property type="entry name" value="S-adenosyl-L-methionine-dependent methyltransferases"/>
    <property type="match status" value="1"/>
</dbReference>
<feature type="chain" id="PRO_1000199710" description="Ubiquinone biosynthesis O-methyltransferase">
    <location>
        <begin position="1"/>
        <end position="242"/>
    </location>
</feature>
<feature type="binding site" evidence="1">
    <location>
        <position position="44"/>
    </location>
    <ligand>
        <name>S-adenosyl-L-methionine</name>
        <dbReference type="ChEBI" id="CHEBI:59789"/>
    </ligand>
</feature>
<feature type="binding site" evidence="1">
    <location>
        <position position="64"/>
    </location>
    <ligand>
        <name>S-adenosyl-L-methionine</name>
        <dbReference type="ChEBI" id="CHEBI:59789"/>
    </ligand>
</feature>
<feature type="binding site" evidence="1">
    <location>
        <position position="85"/>
    </location>
    <ligand>
        <name>S-adenosyl-L-methionine</name>
        <dbReference type="ChEBI" id="CHEBI:59789"/>
    </ligand>
</feature>
<feature type="binding site" evidence="1">
    <location>
        <position position="129"/>
    </location>
    <ligand>
        <name>S-adenosyl-L-methionine</name>
        <dbReference type="ChEBI" id="CHEBI:59789"/>
    </ligand>
</feature>
<proteinExistence type="inferred from homology"/>
<comment type="function">
    <text evidence="1">O-methyltransferase that catalyzes the 2 O-methylation steps in the ubiquinone biosynthetic pathway.</text>
</comment>
<comment type="catalytic activity">
    <reaction evidence="1">
        <text>a 3-demethylubiquinol + S-adenosyl-L-methionine = a ubiquinol + S-adenosyl-L-homocysteine + H(+)</text>
        <dbReference type="Rhea" id="RHEA:44380"/>
        <dbReference type="Rhea" id="RHEA-COMP:9566"/>
        <dbReference type="Rhea" id="RHEA-COMP:10914"/>
        <dbReference type="ChEBI" id="CHEBI:15378"/>
        <dbReference type="ChEBI" id="CHEBI:17976"/>
        <dbReference type="ChEBI" id="CHEBI:57856"/>
        <dbReference type="ChEBI" id="CHEBI:59789"/>
        <dbReference type="ChEBI" id="CHEBI:84422"/>
        <dbReference type="EC" id="2.1.1.64"/>
    </reaction>
</comment>
<comment type="catalytic activity">
    <reaction evidence="1">
        <text>a 3-(all-trans-polyprenyl)benzene-1,2-diol + S-adenosyl-L-methionine = a 2-methoxy-6-(all-trans-polyprenyl)phenol + S-adenosyl-L-homocysteine + H(+)</text>
        <dbReference type="Rhea" id="RHEA:31411"/>
        <dbReference type="Rhea" id="RHEA-COMP:9550"/>
        <dbReference type="Rhea" id="RHEA-COMP:9551"/>
        <dbReference type="ChEBI" id="CHEBI:15378"/>
        <dbReference type="ChEBI" id="CHEBI:57856"/>
        <dbReference type="ChEBI" id="CHEBI:59789"/>
        <dbReference type="ChEBI" id="CHEBI:62729"/>
        <dbReference type="ChEBI" id="CHEBI:62731"/>
        <dbReference type="EC" id="2.1.1.222"/>
    </reaction>
</comment>
<comment type="pathway">
    <text evidence="1">Cofactor biosynthesis; ubiquinone biosynthesis.</text>
</comment>
<comment type="similarity">
    <text evidence="1">Belongs to the methyltransferase superfamily. UbiG/COQ3 family.</text>
</comment>
<organism>
    <name type="scientific">Yersinia pseudotuberculosis serotype IB (strain PB1/+)</name>
    <dbReference type="NCBI Taxonomy" id="502801"/>
    <lineage>
        <taxon>Bacteria</taxon>
        <taxon>Pseudomonadati</taxon>
        <taxon>Pseudomonadota</taxon>
        <taxon>Gammaproteobacteria</taxon>
        <taxon>Enterobacterales</taxon>
        <taxon>Yersiniaceae</taxon>
        <taxon>Yersinia</taxon>
    </lineage>
</organism>
<protein>
    <recommendedName>
        <fullName evidence="1">Ubiquinone biosynthesis O-methyltransferase</fullName>
    </recommendedName>
    <alternativeName>
        <fullName evidence="1">2-polyprenyl-6-hydroxyphenol methylase</fullName>
        <ecNumber evidence="1">2.1.1.222</ecNumber>
    </alternativeName>
    <alternativeName>
        <fullName evidence="1">3-demethylubiquinone 3-O-methyltransferase</fullName>
        <ecNumber evidence="1">2.1.1.64</ecNumber>
    </alternativeName>
</protein>
<evidence type="ECO:0000255" key="1">
    <source>
        <dbReference type="HAMAP-Rule" id="MF_00472"/>
    </source>
</evidence>
<reference key="1">
    <citation type="submission" date="2008-04" db="EMBL/GenBank/DDBJ databases">
        <title>Complete sequence of Yersinia pseudotuberculosis PB1/+.</title>
        <authorList>
            <person name="Copeland A."/>
            <person name="Lucas S."/>
            <person name="Lapidus A."/>
            <person name="Glavina del Rio T."/>
            <person name="Dalin E."/>
            <person name="Tice H."/>
            <person name="Bruce D."/>
            <person name="Goodwin L."/>
            <person name="Pitluck S."/>
            <person name="Munk A.C."/>
            <person name="Brettin T."/>
            <person name="Detter J.C."/>
            <person name="Han C."/>
            <person name="Tapia R."/>
            <person name="Schmutz J."/>
            <person name="Larimer F."/>
            <person name="Land M."/>
            <person name="Hauser L."/>
            <person name="Challacombe J.F."/>
            <person name="Green L."/>
            <person name="Lindler L.E."/>
            <person name="Nikolich M.P."/>
            <person name="Richardson P."/>
        </authorList>
    </citation>
    <scope>NUCLEOTIDE SEQUENCE [LARGE SCALE GENOMIC DNA]</scope>
    <source>
        <strain>PB1/+</strain>
    </source>
</reference>
<name>UBIG_YERPB</name>
<gene>
    <name evidence="1" type="primary">ubiG</name>
    <name type="ordered locus">YPTS_1342</name>
</gene>
<keyword id="KW-0489">Methyltransferase</keyword>
<keyword id="KW-0949">S-adenosyl-L-methionine</keyword>
<keyword id="KW-0808">Transferase</keyword>
<keyword id="KW-0831">Ubiquinone biosynthesis</keyword>
<accession>B2K9A4</accession>
<sequence>MRAKTTSRHHNVDEQEIAKFEAVASRWWDLEGEFKPLHRINPLRLNYILQRSGGIFEKKVLDVGCGGGILAESMAREGAQVTGLDMGYEPLQVARLHALETGVKLEYVQETVENHAQQHPQHYDVVTCMEMLEHVPDPASVVRACAQLVKPGGHVFFSTINRNTKSWLMAVVGAEYLLKMVPKGTHDAKKFIRPSELIGWVDQTPLLERHIIGLHYNPITDHFKLGRNVDVNYMVHTQRDSE</sequence>